<dbReference type="EMBL" id="X80033">
    <property type="protein sequence ID" value="CAA56337.1"/>
    <property type="molecule type" value="Genomic_DNA"/>
</dbReference>
<dbReference type="PIR" id="S51613">
    <property type="entry name" value="S51613"/>
</dbReference>
<dbReference type="SMR" id="P43062"/>
<dbReference type="VEuPathDB" id="FungiDB:C5_01100C_A"/>
<dbReference type="VEuPathDB" id="FungiDB:CAWG_04499"/>
<dbReference type="GO" id="GO:0016538">
    <property type="term" value="F:cyclin-dependent protein serine/threonine kinase regulator activity"/>
    <property type="evidence" value="ECO:0007669"/>
    <property type="project" value="UniProtKB-ARBA"/>
</dbReference>
<dbReference type="GO" id="GO:0051301">
    <property type="term" value="P:cell division"/>
    <property type="evidence" value="ECO:0007669"/>
    <property type="project" value="UniProtKB-KW"/>
</dbReference>
<dbReference type="GO" id="GO:0030447">
    <property type="term" value="P:filamentous growth"/>
    <property type="evidence" value="ECO:0007669"/>
    <property type="project" value="UniProtKB-ARBA"/>
</dbReference>
<dbReference type="GO" id="GO:2000045">
    <property type="term" value="P:regulation of G1/S transition of mitotic cell cycle"/>
    <property type="evidence" value="ECO:0007669"/>
    <property type="project" value="InterPro"/>
</dbReference>
<dbReference type="CDD" id="cd20559">
    <property type="entry name" value="CYCLIN_ScCLN_like"/>
    <property type="match status" value="1"/>
</dbReference>
<dbReference type="FunFam" id="1.10.472.10:FF:000080">
    <property type="entry name" value="G1/S-specific cyclin"/>
    <property type="match status" value="1"/>
</dbReference>
<dbReference type="Gene3D" id="1.10.472.10">
    <property type="entry name" value="Cyclin-like"/>
    <property type="match status" value="2"/>
</dbReference>
<dbReference type="InterPro" id="IPR039361">
    <property type="entry name" value="Cyclin"/>
</dbReference>
<dbReference type="InterPro" id="IPR013763">
    <property type="entry name" value="Cyclin-like_dom"/>
</dbReference>
<dbReference type="InterPro" id="IPR036915">
    <property type="entry name" value="Cyclin-like_sf"/>
</dbReference>
<dbReference type="InterPro" id="IPR014399">
    <property type="entry name" value="Cyclin_CLN"/>
</dbReference>
<dbReference type="InterPro" id="IPR006671">
    <property type="entry name" value="Cyclin_N"/>
</dbReference>
<dbReference type="InterPro" id="IPR048258">
    <property type="entry name" value="Cyclins_cyclin-box"/>
</dbReference>
<dbReference type="PANTHER" id="PTHR10177">
    <property type="entry name" value="CYCLINS"/>
    <property type="match status" value="1"/>
</dbReference>
<dbReference type="Pfam" id="PF00134">
    <property type="entry name" value="Cyclin_N"/>
    <property type="match status" value="1"/>
</dbReference>
<dbReference type="PIRSF" id="PIRSF001770">
    <property type="entry name" value="Cyclin_CLN"/>
    <property type="match status" value="1"/>
</dbReference>
<dbReference type="SMART" id="SM00385">
    <property type="entry name" value="CYCLIN"/>
    <property type="match status" value="1"/>
</dbReference>
<dbReference type="SUPFAM" id="SSF47954">
    <property type="entry name" value="Cyclin-like"/>
    <property type="match status" value="1"/>
</dbReference>
<dbReference type="PROSITE" id="PS00292">
    <property type="entry name" value="CYCLINS"/>
    <property type="match status" value="1"/>
</dbReference>
<proteinExistence type="inferred from homology"/>
<evidence type="ECO:0000250" key="1"/>
<evidence type="ECO:0000305" key="2"/>
<name>CG12_CANAX</name>
<protein>
    <recommendedName>
        <fullName>G1/S-specific cyclin CLN2</fullName>
    </recommendedName>
</protein>
<comment type="function">
    <text evidence="1">Essential for the control of the cell cycle at the G1/S (start) transition. Interacts with the CDC28 protein kinase to form MPF (By similarity).</text>
</comment>
<comment type="similarity">
    <text evidence="2">Belongs to the cyclin family.</text>
</comment>
<organism>
    <name type="scientific">Candida albicans</name>
    <name type="common">Yeast</name>
    <dbReference type="NCBI Taxonomy" id="5476"/>
    <lineage>
        <taxon>Eukaryota</taxon>
        <taxon>Fungi</taxon>
        <taxon>Dikarya</taxon>
        <taxon>Ascomycota</taxon>
        <taxon>Saccharomycotina</taxon>
        <taxon>Pichiomycetes</taxon>
        <taxon>Debaryomycetaceae</taxon>
        <taxon>Candida/Lodderomyces clade</taxon>
        <taxon>Candida</taxon>
    </lineage>
</organism>
<accession>P43062</accession>
<feature type="chain" id="PRO_0000080415" description="G1/S-specific cyclin CLN2">
    <location>
        <begin position="1"/>
        <end position="465"/>
    </location>
</feature>
<reference key="1">
    <citation type="journal article" date="1994" name="Mol. Gen. Genet.">
        <title>Molecular cloning and analysis of CDC28 and cyclin homologues from the human fungal pathogen Candida albicans.</title>
        <authorList>
            <person name="Sherlock G."/>
            <person name="Bahman A.M."/>
            <person name="Mahal A."/>
            <person name="Shieh J.C."/>
            <person name="Ferreira M."/>
            <person name="Rosamond J."/>
        </authorList>
    </citation>
    <scope>NUCLEOTIDE SEQUENCE [GENOMIC DNA]</scope>
    <source>
        <strain>SGY126</strain>
    </source>
</reference>
<sequence>MFPNSPDAFHQVRMMQSSIKASNFKLQSMEFRCHSNNVCEYQMEMLHHLLSVEAKTLPSLSLIEQQPEIKLGMRPLLLDFLMEVITILNLSRSTFPLTVNLIDRYCSTRIVKKQHYQLLGLTSLWISCKNLDSKFKVPTLNDLRKICVDSYYKELFVEMEKHILKSLEWVVNAPTFDAFIDLYSNLLISNSSNFEVANIIKKSSHKIKLFSNYIGELFQFYPNIYYDYTSSQIALIAILITVLTLKIPVDLISLLNFYNGLVKTEMFKSNVEQGAEDQFEEILSVDSFKSLFNKSFFKNLIKIIDNPPSSLKIKYFAENGKYSVLMKQLVTTASNTLKCILDPVPTTPKANSFVKHQQQQHHYHPRPPMSINTSMIPLTPVSNSTSPNRFSPDQIFSENESTPGIAFGTMTPDSQSTSPGEKRSYECIDELEIGTSTIAGYTLKNHDTLKRSKSANYGTLFYLQQ</sequence>
<gene>
    <name type="primary">CLN2</name>
</gene>
<keyword id="KW-0131">Cell cycle</keyword>
<keyword id="KW-0132">Cell division</keyword>
<keyword id="KW-0195">Cyclin</keyword>